<protein>
    <recommendedName>
        <fullName evidence="1">Large ribosomal subunit protein bL31</fullName>
    </recommendedName>
    <alternativeName>
        <fullName evidence="2">50S ribosomal protein L31</fullName>
    </alternativeName>
</protein>
<evidence type="ECO:0000255" key="1">
    <source>
        <dbReference type="HAMAP-Rule" id="MF_00501"/>
    </source>
</evidence>
<evidence type="ECO:0000305" key="2"/>
<feature type="chain" id="PRO_1000126550" description="Large ribosomal subunit protein bL31">
    <location>
        <begin position="1"/>
        <end position="68"/>
    </location>
</feature>
<feature type="binding site" evidence="1">
    <location>
        <position position="16"/>
    </location>
    <ligand>
        <name>Zn(2+)</name>
        <dbReference type="ChEBI" id="CHEBI:29105"/>
    </ligand>
</feature>
<feature type="binding site" evidence="1">
    <location>
        <position position="18"/>
    </location>
    <ligand>
        <name>Zn(2+)</name>
        <dbReference type="ChEBI" id="CHEBI:29105"/>
    </ligand>
</feature>
<feature type="binding site" evidence="1">
    <location>
        <position position="37"/>
    </location>
    <ligand>
        <name>Zn(2+)</name>
        <dbReference type="ChEBI" id="CHEBI:29105"/>
    </ligand>
</feature>
<feature type="binding site" evidence="1">
    <location>
        <position position="40"/>
    </location>
    <ligand>
        <name>Zn(2+)</name>
        <dbReference type="ChEBI" id="CHEBI:29105"/>
    </ligand>
</feature>
<comment type="function">
    <text evidence="1">Binds the 23S rRNA.</text>
</comment>
<comment type="cofactor">
    <cofactor evidence="1">
        <name>Zn(2+)</name>
        <dbReference type="ChEBI" id="CHEBI:29105"/>
    </cofactor>
    <text evidence="1">Binds 1 zinc ion per subunit.</text>
</comment>
<comment type="subunit">
    <text evidence="1">Part of the 50S ribosomal subunit.</text>
</comment>
<comment type="similarity">
    <text evidence="1">Belongs to the bacterial ribosomal protein bL31 family. Type A subfamily.</text>
</comment>
<keyword id="KW-0479">Metal-binding</keyword>
<keyword id="KW-0687">Ribonucleoprotein</keyword>
<keyword id="KW-0689">Ribosomal protein</keyword>
<keyword id="KW-0694">RNA-binding</keyword>
<keyword id="KW-0699">rRNA-binding</keyword>
<keyword id="KW-0862">Zinc</keyword>
<organism>
    <name type="scientific">Acidithiobacillus ferrooxidans (strain ATCC 53993 / BNL-5-31)</name>
    <name type="common">Leptospirillum ferrooxidans (ATCC 53993)</name>
    <dbReference type="NCBI Taxonomy" id="380394"/>
    <lineage>
        <taxon>Bacteria</taxon>
        <taxon>Pseudomonadati</taxon>
        <taxon>Pseudomonadota</taxon>
        <taxon>Acidithiobacillia</taxon>
        <taxon>Acidithiobacillales</taxon>
        <taxon>Acidithiobacillaceae</taxon>
        <taxon>Acidithiobacillus</taxon>
    </lineage>
</organism>
<name>RL31_ACIF5</name>
<gene>
    <name evidence="1" type="primary">rpmE</name>
    <name type="ordered locus">Lferr_0808</name>
</gene>
<proteinExistence type="inferred from homology"/>
<sequence>MKSNIHPKYEEITVTCSCGNVFKTRSTANRDLHIDLCSECHPFYTGKQRAVSAAGQVEKFRKRYGGGQ</sequence>
<reference key="1">
    <citation type="submission" date="2008-08" db="EMBL/GenBank/DDBJ databases">
        <title>Complete sequence of Acidithiobacillus ferrooxidans ATCC 53993.</title>
        <authorList>
            <person name="Lucas S."/>
            <person name="Copeland A."/>
            <person name="Lapidus A."/>
            <person name="Glavina del Rio T."/>
            <person name="Dalin E."/>
            <person name="Tice H."/>
            <person name="Bruce D."/>
            <person name="Goodwin L."/>
            <person name="Pitluck S."/>
            <person name="Sims D."/>
            <person name="Brettin T."/>
            <person name="Detter J.C."/>
            <person name="Han C."/>
            <person name="Kuske C.R."/>
            <person name="Larimer F."/>
            <person name="Land M."/>
            <person name="Hauser L."/>
            <person name="Kyrpides N."/>
            <person name="Lykidis A."/>
            <person name="Borole A.P."/>
        </authorList>
    </citation>
    <scope>NUCLEOTIDE SEQUENCE [LARGE SCALE GENOMIC DNA]</scope>
    <source>
        <strain>ATCC 53993 / BNL-5-31</strain>
    </source>
</reference>
<dbReference type="EMBL" id="CP001132">
    <property type="protein sequence ID" value="ACH83058.1"/>
    <property type="molecule type" value="Genomic_DNA"/>
</dbReference>
<dbReference type="RefSeq" id="WP_012536269.1">
    <property type="nucleotide sequence ID" value="NC_011206.1"/>
</dbReference>
<dbReference type="SMR" id="B5ENM4"/>
<dbReference type="GeneID" id="65280010"/>
<dbReference type="KEGG" id="afe:Lferr_0808"/>
<dbReference type="eggNOG" id="COG0254">
    <property type="taxonomic scope" value="Bacteria"/>
</dbReference>
<dbReference type="HOGENOM" id="CLU_114306_4_0_6"/>
<dbReference type="GO" id="GO:1990904">
    <property type="term" value="C:ribonucleoprotein complex"/>
    <property type="evidence" value="ECO:0007669"/>
    <property type="project" value="UniProtKB-KW"/>
</dbReference>
<dbReference type="GO" id="GO:0005840">
    <property type="term" value="C:ribosome"/>
    <property type="evidence" value="ECO:0007669"/>
    <property type="project" value="UniProtKB-KW"/>
</dbReference>
<dbReference type="GO" id="GO:0046872">
    <property type="term" value="F:metal ion binding"/>
    <property type="evidence" value="ECO:0007669"/>
    <property type="project" value="UniProtKB-KW"/>
</dbReference>
<dbReference type="GO" id="GO:0019843">
    <property type="term" value="F:rRNA binding"/>
    <property type="evidence" value="ECO:0007669"/>
    <property type="project" value="UniProtKB-KW"/>
</dbReference>
<dbReference type="GO" id="GO:0003735">
    <property type="term" value="F:structural constituent of ribosome"/>
    <property type="evidence" value="ECO:0007669"/>
    <property type="project" value="InterPro"/>
</dbReference>
<dbReference type="GO" id="GO:0006412">
    <property type="term" value="P:translation"/>
    <property type="evidence" value="ECO:0007669"/>
    <property type="project" value="UniProtKB-UniRule"/>
</dbReference>
<dbReference type="Gene3D" id="4.10.830.30">
    <property type="entry name" value="Ribosomal protein L31"/>
    <property type="match status" value="1"/>
</dbReference>
<dbReference type="HAMAP" id="MF_00501">
    <property type="entry name" value="Ribosomal_bL31_1"/>
    <property type="match status" value="1"/>
</dbReference>
<dbReference type="InterPro" id="IPR034704">
    <property type="entry name" value="Ribosomal_bL28/bL31-like_sf"/>
</dbReference>
<dbReference type="InterPro" id="IPR002150">
    <property type="entry name" value="Ribosomal_bL31"/>
</dbReference>
<dbReference type="InterPro" id="IPR027491">
    <property type="entry name" value="Ribosomal_bL31_A"/>
</dbReference>
<dbReference type="InterPro" id="IPR042105">
    <property type="entry name" value="Ribosomal_bL31_sf"/>
</dbReference>
<dbReference type="NCBIfam" id="TIGR00105">
    <property type="entry name" value="L31"/>
    <property type="match status" value="1"/>
</dbReference>
<dbReference type="NCBIfam" id="NF000612">
    <property type="entry name" value="PRK00019.1"/>
    <property type="match status" value="1"/>
</dbReference>
<dbReference type="NCBIfam" id="NF001809">
    <property type="entry name" value="PRK00528.1"/>
    <property type="match status" value="1"/>
</dbReference>
<dbReference type="PANTHER" id="PTHR33280">
    <property type="entry name" value="50S RIBOSOMAL PROTEIN L31, CHLOROPLASTIC"/>
    <property type="match status" value="1"/>
</dbReference>
<dbReference type="PANTHER" id="PTHR33280:SF6">
    <property type="entry name" value="LARGE RIBOSOMAL SUBUNIT PROTEIN BL31A"/>
    <property type="match status" value="1"/>
</dbReference>
<dbReference type="Pfam" id="PF01197">
    <property type="entry name" value="Ribosomal_L31"/>
    <property type="match status" value="1"/>
</dbReference>
<dbReference type="PRINTS" id="PR01249">
    <property type="entry name" value="RIBOSOMALL31"/>
</dbReference>
<dbReference type="SUPFAM" id="SSF143800">
    <property type="entry name" value="L28p-like"/>
    <property type="match status" value="1"/>
</dbReference>
<accession>B5ENM4</accession>